<accession>A1SNL4</accession>
<proteinExistence type="inferred from homology"/>
<evidence type="ECO:0000255" key="1">
    <source>
        <dbReference type="HAMAP-Rule" id="MF_00531"/>
    </source>
</evidence>
<evidence type="ECO:0000256" key="2">
    <source>
        <dbReference type="SAM" id="MobiDB-lite"/>
    </source>
</evidence>
<evidence type="ECO:0000305" key="3"/>
<reference key="1">
    <citation type="submission" date="2006-12" db="EMBL/GenBank/DDBJ databases">
        <title>Complete sequence of chromosome 1 of Nocardioides sp. JS614.</title>
        <authorList>
            <person name="Copeland A."/>
            <person name="Lucas S."/>
            <person name="Lapidus A."/>
            <person name="Barry K."/>
            <person name="Detter J.C."/>
            <person name="Glavina del Rio T."/>
            <person name="Hammon N."/>
            <person name="Israni S."/>
            <person name="Dalin E."/>
            <person name="Tice H."/>
            <person name="Pitluck S."/>
            <person name="Thompson L.S."/>
            <person name="Brettin T."/>
            <person name="Bruce D."/>
            <person name="Han C."/>
            <person name="Tapia R."/>
            <person name="Schmutz J."/>
            <person name="Larimer F."/>
            <person name="Land M."/>
            <person name="Hauser L."/>
            <person name="Kyrpides N."/>
            <person name="Kim E."/>
            <person name="Mattes T."/>
            <person name="Gossett J."/>
            <person name="Richardson P."/>
        </authorList>
    </citation>
    <scope>NUCLEOTIDE SEQUENCE [LARGE SCALE GENOMIC DNA]</scope>
    <source>
        <strain>ATCC BAA-499 / JS614</strain>
    </source>
</reference>
<comment type="function">
    <text evidence="1">Protein S19 forms a complex with S13 that binds strongly to the 16S ribosomal RNA.</text>
</comment>
<comment type="similarity">
    <text evidence="1">Belongs to the universal ribosomal protein uS19 family.</text>
</comment>
<dbReference type="EMBL" id="CP000509">
    <property type="protein sequence ID" value="ABL83399.1"/>
    <property type="molecule type" value="Genomic_DNA"/>
</dbReference>
<dbReference type="RefSeq" id="WP_011757330.1">
    <property type="nucleotide sequence ID" value="NC_008699.1"/>
</dbReference>
<dbReference type="SMR" id="A1SNL4"/>
<dbReference type="STRING" id="196162.Noca_3901"/>
<dbReference type="KEGG" id="nca:Noca_3901"/>
<dbReference type="eggNOG" id="COG0185">
    <property type="taxonomic scope" value="Bacteria"/>
</dbReference>
<dbReference type="HOGENOM" id="CLU_144911_0_1_11"/>
<dbReference type="OrthoDB" id="9797833at2"/>
<dbReference type="Proteomes" id="UP000000640">
    <property type="component" value="Chromosome"/>
</dbReference>
<dbReference type="GO" id="GO:0005737">
    <property type="term" value="C:cytoplasm"/>
    <property type="evidence" value="ECO:0007669"/>
    <property type="project" value="UniProtKB-ARBA"/>
</dbReference>
<dbReference type="GO" id="GO:0015935">
    <property type="term" value="C:small ribosomal subunit"/>
    <property type="evidence" value="ECO:0007669"/>
    <property type="project" value="InterPro"/>
</dbReference>
<dbReference type="GO" id="GO:0019843">
    <property type="term" value="F:rRNA binding"/>
    <property type="evidence" value="ECO:0007669"/>
    <property type="project" value="UniProtKB-UniRule"/>
</dbReference>
<dbReference type="GO" id="GO:0003735">
    <property type="term" value="F:structural constituent of ribosome"/>
    <property type="evidence" value="ECO:0007669"/>
    <property type="project" value="InterPro"/>
</dbReference>
<dbReference type="GO" id="GO:0000028">
    <property type="term" value="P:ribosomal small subunit assembly"/>
    <property type="evidence" value="ECO:0007669"/>
    <property type="project" value="TreeGrafter"/>
</dbReference>
<dbReference type="GO" id="GO:0006412">
    <property type="term" value="P:translation"/>
    <property type="evidence" value="ECO:0007669"/>
    <property type="project" value="UniProtKB-UniRule"/>
</dbReference>
<dbReference type="FunFam" id="3.30.860.10:FF:000001">
    <property type="entry name" value="30S ribosomal protein S19"/>
    <property type="match status" value="1"/>
</dbReference>
<dbReference type="Gene3D" id="3.30.860.10">
    <property type="entry name" value="30s Ribosomal Protein S19, Chain A"/>
    <property type="match status" value="1"/>
</dbReference>
<dbReference type="HAMAP" id="MF_00531">
    <property type="entry name" value="Ribosomal_uS19"/>
    <property type="match status" value="1"/>
</dbReference>
<dbReference type="InterPro" id="IPR002222">
    <property type="entry name" value="Ribosomal_uS19"/>
</dbReference>
<dbReference type="InterPro" id="IPR005732">
    <property type="entry name" value="Ribosomal_uS19_bac-type"/>
</dbReference>
<dbReference type="InterPro" id="IPR020934">
    <property type="entry name" value="Ribosomal_uS19_CS"/>
</dbReference>
<dbReference type="InterPro" id="IPR023575">
    <property type="entry name" value="Ribosomal_uS19_SF"/>
</dbReference>
<dbReference type="NCBIfam" id="TIGR01050">
    <property type="entry name" value="rpsS_bact"/>
    <property type="match status" value="1"/>
</dbReference>
<dbReference type="PANTHER" id="PTHR11880">
    <property type="entry name" value="RIBOSOMAL PROTEIN S19P FAMILY MEMBER"/>
    <property type="match status" value="1"/>
</dbReference>
<dbReference type="PANTHER" id="PTHR11880:SF8">
    <property type="entry name" value="SMALL RIBOSOMAL SUBUNIT PROTEIN US19M"/>
    <property type="match status" value="1"/>
</dbReference>
<dbReference type="Pfam" id="PF00203">
    <property type="entry name" value="Ribosomal_S19"/>
    <property type="match status" value="1"/>
</dbReference>
<dbReference type="PIRSF" id="PIRSF002144">
    <property type="entry name" value="Ribosomal_S19"/>
    <property type="match status" value="1"/>
</dbReference>
<dbReference type="PRINTS" id="PR00975">
    <property type="entry name" value="RIBOSOMALS19"/>
</dbReference>
<dbReference type="SUPFAM" id="SSF54570">
    <property type="entry name" value="Ribosomal protein S19"/>
    <property type="match status" value="1"/>
</dbReference>
<dbReference type="PROSITE" id="PS00323">
    <property type="entry name" value="RIBOSOMAL_S19"/>
    <property type="match status" value="1"/>
</dbReference>
<gene>
    <name evidence="1" type="primary">rpsS</name>
    <name type="ordered locus">Noca_3901</name>
</gene>
<sequence length="93" mass="10637">MPRSLKKGPFVDDHLQKKVDAENAKGSHNVIKTWSRRSMIVPDMIGHTIAVHDGRKHVPVFVTDSMVGHKLGEFAPTRTYRGHVKEDRKGRRR</sequence>
<protein>
    <recommendedName>
        <fullName evidence="1">Small ribosomal subunit protein uS19</fullName>
    </recommendedName>
    <alternativeName>
        <fullName evidence="3">30S ribosomal protein S19</fullName>
    </alternativeName>
</protein>
<organism>
    <name type="scientific">Nocardioides sp. (strain ATCC BAA-499 / JS614)</name>
    <dbReference type="NCBI Taxonomy" id="196162"/>
    <lineage>
        <taxon>Bacteria</taxon>
        <taxon>Bacillati</taxon>
        <taxon>Actinomycetota</taxon>
        <taxon>Actinomycetes</taxon>
        <taxon>Propionibacteriales</taxon>
        <taxon>Nocardioidaceae</taxon>
        <taxon>Nocardioides</taxon>
    </lineage>
</organism>
<feature type="chain" id="PRO_1000051088" description="Small ribosomal subunit protein uS19">
    <location>
        <begin position="1"/>
        <end position="93"/>
    </location>
</feature>
<feature type="region of interest" description="Disordered" evidence="2">
    <location>
        <begin position="1"/>
        <end position="23"/>
    </location>
</feature>
<feature type="compositionally biased region" description="Basic and acidic residues" evidence="2">
    <location>
        <begin position="9"/>
        <end position="23"/>
    </location>
</feature>
<keyword id="KW-1185">Reference proteome</keyword>
<keyword id="KW-0687">Ribonucleoprotein</keyword>
<keyword id="KW-0689">Ribosomal protein</keyword>
<keyword id="KW-0694">RNA-binding</keyword>
<keyword id="KW-0699">rRNA-binding</keyword>
<name>RS19_NOCSJ</name>